<reference key="1">
    <citation type="journal article" date="2009" name="J. Bacteriol.">
        <title>Genomic sequencing reveals regulatory mutations and recombinational events in the widely used MC4100 lineage of Escherichia coli K-12.</title>
        <authorList>
            <person name="Ferenci T."/>
            <person name="Zhou Z."/>
            <person name="Betteridge T."/>
            <person name="Ren Y."/>
            <person name="Liu Y."/>
            <person name="Feng L."/>
            <person name="Reeves P.R."/>
            <person name="Wang L."/>
        </authorList>
    </citation>
    <scope>NUCLEOTIDE SEQUENCE [LARGE SCALE GENOMIC DNA]</scope>
    <source>
        <strain>K12 / MC4100 / BW2952</strain>
    </source>
</reference>
<evidence type="ECO:0000255" key="1">
    <source>
        <dbReference type="HAMAP-Rule" id="MF_00010"/>
    </source>
</evidence>
<organism>
    <name type="scientific">Escherichia coli (strain K12 / MC4100 / BW2952)</name>
    <dbReference type="NCBI Taxonomy" id="595496"/>
    <lineage>
        <taxon>Bacteria</taxon>
        <taxon>Pseudomonadati</taxon>
        <taxon>Pseudomonadota</taxon>
        <taxon>Gammaproteobacteria</taxon>
        <taxon>Enterobacterales</taxon>
        <taxon>Enterobacteriaceae</taxon>
        <taxon>Escherichia</taxon>
    </lineage>
</organism>
<comment type="subcellular location">
    <subcellularLocation>
        <location evidence="1">Cell inner membrane</location>
        <topology evidence="1">Multi-pass membrane protein</topology>
    </subcellularLocation>
</comment>
<comment type="similarity">
    <text evidence="1">Belongs to the UPF0060 family.</text>
</comment>
<name>YNFA_ECOBW</name>
<accession>C4ZWZ4</accession>
<protein>
    <recommendedName>
        <fullName evidence="1">UPF0060 membrane protein YnfA</fullName>
    </recommendedName>
</protein>
<dbReference type="EMBL" id="CP001396">
    <property type="protein sequence ID" value="ACR62180.1"/>
    <property type="molecule type" value="Genomic_DNA"/>
</dbReference>
<dbReference type="RefSeq" id="WP_000598292.1">
    <property type="nucleotide sequence ID" value="NC_012759.1"/>
</dbReference>
<dbReference type="SMR" id="C4ZWZ4"/>
<dbReference type="KEGG" id="ebw:BWG_1396"/>
<dbReference type="HOGENOM" id="CLU_117653_2_1_6"/>
<dbReference type="GO" id="GO:0005886">
    <property type="term" value="C:plasma membrane"/>
    <property type="evidence" value="ECO:0007669"/>
    <property type="project" value="UniProtKB-SubCell"/>
</dbReference>
<dbReference type="HAMAP" id="MF_00010">
    <property type="entry name" value="UPF0060"/>
    <property type="match status" value="1"/>
</dbReference>
<dbReference type="InterPro" id="IPR003844">
    <property type="entry name" value="UPF0060"/>
</dbReference>
<dbReference type="NCBIfam" id="NF002586">
    <property type="entry name" value="PRK02237.1"/>
    <property type="match status" value="1"/>
</dbReference>
<dbReference type="PANTHER" id="PTHR36116">
    <property type="entry name" value="UPF0060 MEMBRANE PROTEIN YNFA"/>
    <property type="match status" value="1"/>
</dbReference>
<dbReference type="PANTHER" id="PTHR36116:SF1">
    <property type="entry name" value="UPF0060 MEMBRANE PROTEIN YNFA"/>
    <property type="match status" value="1"/>
</dbReference>
<dbReference type="Pfam" id="PF02694">
    <property type="entry name" value="UPF0060"/>
    <property type="match status" value="1"/>
</dbReference>
<dbReference type="SUPFAM" id="SSF103481">
    <property type="entry name" value="Multidrug resistance efflux transporter EmrE"/>
    <property type="match status" value="1"/>
</dbReference>
<keyword id="KW-0997">Cell inner membrane</keyword>
<keyword id="KW-1003">Cell membrane</keyword>
<keyword id="KW-0472">Membrane</keyword>
<keyword id="KW-0812">Transmembrane</keyword>
<keyword id="KW-1133">Transmembrane helix</keyword>
<feature type="chain" id="PRO_1000201747" description="UPF0060 membrane protein YnfA">
    <location>
        <begin position="1"/>
        <end position="108"/>
    </location>
</feature>
<feature type="topological domain" description="Periplasmic" evidence="1">
    <location>
        <begin position="1"/>
        <end position="5"/>
    </location>
</feature>
<feature type="transmembrane region" description="Helical" evidence="1">
    <location>
        <begin position="6"/>
        <end position="26"/>
    </location>
</feature>
<feature type="topological domain" description="Cytoplasmic" evidence="1">
    <location>
        <begin position="27"/>
        <end position="30"/>
    </location>
</feature>
<feature type="transmembrane region" description="Helical" evidence="1">
    <location>
        <begin position="31"/>
        <end position="51"/>
    </location>
</feature>
<feature type="topological domain" description="Periplasmic" evidence="1">
    <location>
        <begin position="52"/>
        <end position="60"/>
    </location>
</feature>
<feature type="transmembrane region" description="Helical" evidence="1">
    <location>
        <begin position="61"/>
        <end position="81"/>
    </location>
</feature>
<feature type="topological domain" description="Cytoplasmic" evidence="1">
    <location>
        <begin position="82"/>
        <end position="84"/>
    </location>
</feature>
<feature type="transmembrane region" description="Helical" evidence="1">
    <location>
        <begin position="85"/>
        <end position="105"/>
    </location>
</feature>
<feature type="topological domain" description="Periplasmic" evidence="1">
    <location>
        <begin position="106"/>
        <end position="108"/>
    </location>
</feature>
<gene>
    <name evidence="1" type="primary">ynfA</name>
    <name type="ordered locus">BWG_1396</name>
</gene>
<sequence length="108" mass="11920">MIKTTLLFFATALCEIIGCFLPWLWLKRNASIWLLLPAGISLALFVWLLTLHPAASGRVYAAYGGVYVCTALMWLRVVDGVKLTLYDWTGALIALCGMLIIVAGWGRT</sequence>
<proteinExistence type="inferred from homology"/>